<proteinExistence type="inferred from homology"/>
<evidence type="ECO:0000305" key="1"/>
<sequence length="238" mass="27152">MARRYWNINLEEMMVAGVHFGHPTKQWNPKMAPYIYAKVKRKGIHIPNLTRTARFLSEACDLVFDAASRGKEFLIVGTKPKAAGSVVRAAIRARCHYVNKKWLGGMLTNWFTTKTRLHTFRDLRMEQKTGRLNRLPKRDVAMLKRQLSRLQAYLGGIQYMTGLPDIVILVDQHEEYTALRECITLGIPTICLIDTNCDPDLADLPIPANDDAKPSIRLILNKLVFAICEGRSSYIRNP</sequence>
<organism>
    <name type="scientific">Jasminum nudiflorum</name>
    <name type="common">Winter jasmine</name>
    <dbReference type="NCBI Taxonomy" id="126431"/>
    <lineage>
        <taxon>Eukaryota</taxon>
        <taxon>Viridiplantae</taxon>
        <taxon>Streptophyta</taxon>
        <taxon>Embryophyta</taxon>
        <taxon>Tracheophyta</taxon>
        <taxon>Spermatophyta</taxon>
        <taxon>Magnoliopsida</taxon>
        <taxon>eudicotyledons</taxon>
        <taxon>Gunneridae</taxon>
        <taxon>Pentapetalae</taxon>
        <taxon>asterids</taxon>
        <taxon>lamiids</taxon>
        <taxon>Lamiales</taxon>
        <taxon>Oleaceae</taxon>
        <taxon>Jasmineae</taxon>
        <taxon>Jasminum</taxon>
    </lineage>
</organism>
<gene>
    <name type="primary">rps2</name>
    <name type="ORF">JNC0171</name>
</gene>
<name>RR2_JASNU</name>
<reference key="1">
    <citation type="journal article" date="2007" name="Mol. Biol. Evol.">
        <title>Gene relocations within chloroplast genomes of Jasminum and Menodora (Oleaceae) are due to multiple, overlapping inversions.</title>
        <authorList>
            <person name="Lee H.-L."/>
            <person name="Jansen R.K."/>
            <person name="Chumley T.W."/>
            <person name="Kim K.-J."/>
        </authorList>
    </citation>
    <scope>NUCLEOTIDE SEQUENCE [LARGE SCALE GENOMIC DNA]</scope>
</reference>
<comment type="subcellular location">
    <subcellularLocation>
        <location>Plastid</location>
        <location>Chloroplast</location>
    </subcellularLocation>
</comment>
<comment type="similarity">
    <text evidence="1">Belongs to the universal ribosomal protein uS2 family.</text>
</comment>
<geneLocation type="chloroplast"/>
<dbReference type="EMBL" id="DQ673255">
    <property type="protein sequence ID" value="ABG74617.1"/>
    <property type="molecule type" value="Genomic_DNA"/>
</dbReference>
<dbReference type="RefSeq" id="YP_778479.1">
    <property type="nucleotide sequence ID" value="NC_008407.1"/>
</dbReference>
<dbReference type="SMR" id="Q06RE2"/>
<dbReference type="GeneID" id="4319741"/>
<dbReference type="GO" id="GO:0009507">
    <property type="term" value="C:chloroplast"/>
    <property type="evidence" value="ECO:0007669"/>
    <property type="project" value="UniProtKB-SubCell"/>
</dbReference>
<dbReference type="GO" id="GO:0005763">
    <property type="term" value="C:mitochondrial small ribosomal subunit"/>
    <property type="evidence" value="ECO:0007669"/>
    <property type="project" value="TreeGrafter"/>
</dbReference>
<dbReference type="GO" id="GO:0003735">
    <property type="term" value="F:structural constituent of ribosome"/>
    <property type="evidence" value="ECO:0007669"/>
    <property type="project" value="InterPro"/>
</dbReference>
<dbReference type="GO" id="GO:0006412">
    <property type="term" value="P:translation"/>
    <property type="evidence" value="ECO:0007669"/>
    <property type="project" value="UniProtKB-UniRule"/>
</dbReference>
<dbReference type="CDD" id="cd01425">
    <property type="entry name" value="RPS2"/>
    <property type="match status" value="1"/>
</dbReference>
<dbReference type="FunFam" id="3.40.50.10490:FF:000101">
    <property type="match status" value="1"/>
</dbReference>
<dbReference type="FunFam" id="1.10.287.610:FF:000001">
    <property type="entry name" value="30S ribosomal protein S2"/>
    <property type="match status" value="1"/>
</dbReference>
<dbReference type="Gene3D" id="3.40.50.10490">
    <property type="entry name" value="Glucose-6-phosphate isomerase like protein, domain 1"/>
    <property type="match status" value="1"/>
</dbReference>
<dbReference type="Gene3D" id="1.10.287.610">
    <property type="entry name" value="Helix hairpin bin"/>
    <property type="match status" value="1"/>
</dbReference>
<dbReference type="HAMAP" id="MF_00291_B">
    <property type="entry name" value="Ribosomal_uS2_B"/>
    <property type="match status" value="1"/>
</dbReference>
<dbReference type="InterPro" id="IPR001865">
    <property type="entry name" value="Ribosomal_uS2"/>
</dbReference>
<dbReference type="InterPro" id="IPR005706">
    <property type="entry name" value="Ribosomal_uS2_bac/mit/plastid"/>
</dbReference>
<dbReference type="InterPro" id="IPR018130">
    <property type="entry name" value="Ribosomal_uS2_CS"/>
</dbReference>
<dbReference type="InterPro" id="IPR023591">
    <property type="entry name" value="Ribosomal_uS2_flav_dom_sf"/>
</dbReference>
<dbReference type="NCBIfam" id="TIGR01011">
    <property type="entry name" value="rpsB_bact"/>
    <property type="match status" value="1"/>
</dbReference>
<dbReference type="PANTHER" id="PTHR12534">
    <property type="entry name" value="30S RIBOSOMAL PROTEIN S2 PROKARYOTIC AND ORGANELLAR"/>
    <property type="match status" value="1"/>
</dbReference>
<dbReference type="PANTHER" id="PTHR12534:SF0">
    <property type="entry name" value="SMALL RIBOSOMAL SUBUNIT PROTEIN US2M"/>
    <property type="match status" value="1"/>
</dbReference>
<dbReference type="Pfam" id="PF00318">
    <property type="entry name" value="Ribosomal_S2"/>
    <property type="match status" value="1"/>
</dbReference>
<dbReference type="PRINTS" id="PR00395">
    <property type="entry name" value="RIBOSOMALS2"/>
</dbReference>
<dbReference type="SUPFAM" id="SSF52313">
    <property type="entry name" value="Ribosomal protein S2"/>
    <property type="match status" value="1"/>
</dbReference>
<dbReference type="PROSITE" id="PS00962">
    <property type="entry name" value="RIBOSOMAL_S2_1"/>
    <property type="match status" value="1"/>
</dbReference>
<dbReference type="PROSITE" id="PS00963">
    <property type="entry name" value="RIBOSOMAL_S2_2"/>
    <property type="match status" value="1"/>
</dbReference>
<keyword id="KW-0150">Chloroplast</keyword>
<keyword id="KW-0934">Plastid</keyword>
<keyword id="KW-0687">Ribonucleoprotein</keyword>
<keyword id="KW-0689">Ribosomal protein</keyword>
<feature type="chain" id="PRO_0000352123" description="Small ribosomal subunit protein uS2c">
    <location>
        <begin position="1"/>
        <end position="238"/>
    </location>
</feature>
<accession>Q06RE2</accession>
<protein>
    <recommendedName>
        <fullName evidence="1">Small ribosomal subunit protein uS2c</fullName>
    </recommendedName>
    <alternativeName>
        <fullName>30S ribosomal protein S2, chloroplastic</fullName>
    </alternativeName>
</protein>